<feature type="chain" id="PRO_0000407660" description="Methionine aminopeptidase 2">
    <location>
        <begin position="1"/>
        <end position="445"/>
    </location>
</feature>
<feature type="region of interest" description="Disordered" evidence="2">
    <location>
        <begin position="1"/>
        <end position="80"/>
    </location>
</feature>
<feature type="compositionally biased region" description="Basic residues" evidence="2">
    <location>
        <begin position="57"/>
        <end position="71"/>
    </location>
</feature>
<feature type="binding site" evidence="1">
    <location>
        <position position="195"/>
    </location>
    <ligand>
        <name>substrate</name>
    </ligand>
</feature>
<feature type="binding site" evidence="1">
    <location>
        <position position="215"/>
    </location>
    <ligand>
        <name>a divalent metal cation</name>
        <dbReference type="ChEBI" id="CHEBI:60240"/>
        <label>1</label>
    </ligand>
</feature>
<feature type="binding site" evidence="1">
    <location>
        <position position="226"/>
    </location>
    <ligand>
        <name>a divalent metal cation</name>
        <dbReference type="ChEBI" id="CHEBI:60240"/>
        <label>1</label>
    </ligand>
</feature>
<feature type="binding site" evidence="1">
    <location>
        <position position="226"/>
    </location>
    <ligand>
        <name>a divalent metal cation</name>
        <dbReference type="ChEBI" id="CHEBI:60240"/>
        <label>2</label>
        <note>catalytic</note>
    </ligand>
</feature>
<feature type="binding site" evidence="1">
    <location>
        <position position="295"/>
    </location>
    <ligand>
        <name>a divalent metal cation</name>
        <dbReference type="ChEBI" id="CHEBI:60240"/>
        <label>2</label>
        <note>catalytic</note>
    </ligand>
</feature>
<feature type="binding site" evidence="1">
    <location>
        <position position="303"/>
    </location>
    <ligand>
        <name>substrate</name>
    </ligand>
</feature>
<feature type="binding site" evidence="1">
    <location>
        <position position="331"/>
    </location>
    <ligand>
        <name>a divalent metal cation</name>
        <dbReference type="ChEBI" id="CHEBI:60240"/>
        <label>2</label>
        <note>catalytic</note>
    </ligand>
</feature>
<feature type="binding site" evidence="1">
    <location>
        <position position="426"/>
    </location>
    <ligand>
        <name>a divalent metal cation</name>
        <dbReference type="ChEBI" id="CHEBI:60240"/>
        <label>1</label>
    </ligand>
</feature>
<feature type="binding site" evidence="1">
    <location>
        <position position="426"/>
    </location>
    <ligand>
        <name>a divalent metal cation</name>
        <dbReference type="ChEBI" id="CHEBI:60240"/>
        <label>2</label>
        <note>catalytic</note>
    </ligand>
</feature>
<organism>
    <name type="scientific">Paracoccidioides brasiliensis (strain Pb03)</name>
    <dbReference type="NCBI Taxonomy" id="482561"/>
    <lineage>
        <taxon>Eukaryota</taxon>
        <taxon>Fungi</taxon>
        <taxon>Dikarya</taxon>
        <taxon>Ascomycota</taxon>
        <taxon>Pezizomycotina</taxon>
        <taxon>Eurotiomycetes</taxon>
        <taxon>Eurotiomycetidae</taxon>
        <taxon>Onygenales</taxon>
        <taxon>Ajellomycetaceae</taxon>
        <taxon>Paracoccidioides</taxon>
    </lineage>
</organism>
<name>MAP2_PARBP</name>
<comment type="function">
    <text evidence="1">Cotranslationally removes the N-terminal methionine from nascent proteins. The N-terminal methionine is often cleaved when the second residue in the primary sequence is small and uncharged (Met-Ala-, Cys, Gly, Pro, Ser, Thr, or Val).</text>
</comment>
<comment type="catalytic activity">
    <reaction evidence="1">
        <text>Release of N-terminal amino acids, preferentially methionine, from peptides and arylamides.</text>
        <dbReference type="EC" id="3.4.11.18"/>
    </reaction>
</comment>
<comment type="cofactor">
    <cofactor evidence="1">
        <name>Co(2+)</name>
        <dbReference type="ChEBI" id="CHEBI:48828"/>
    </cofactor>
    <cofactor evidence="1">
        <name>Zn(2+)</name>
        <dbReference type="ChEBI" id="CHEBI:29105"/>
    </cofactor>
    <cofactor evidence="1">
        <name>Mn(2+)</name>
        <dbReference type="ChEBI" id="CHEBI:29035"/>
    </cofactor>
    <cofactor evidence="1">
        <name>Fe(2+)</name>
        <dbReference type="ChEBI" id="CHEBI:29033"/>
    </cofactor>
    <text evidence="1">Binds 2 divalent metal cations per subunit. Has a high-affinity and a low affinity metal-binding site. The true nature of the physiological cofactor is under debate. The enzyme is active with cobalt, zinc, manganese or divalent iron ions. Most likely, methionine aminopeptidases function as mononuclear Fe(2+)-metalloproteases under physiological conditions, and the catalytically relevant metal-binding site has been assigned to the histidine-containing high-affinity site.</text>
</comment>
<comment type="subcellular location">
    <subcellularLocation>
        <location evidence="1">Cytoplasm</location>
    </subcellularLocation>
</comment>
<comment type="similarity">
    <text evidence="1">Belongs to the peptidase M24A family. Methionine aminopeptidase eukaryotic type 2 subfamily.</text>
</comment>
<protein>
    <recommendedName>
        <fullName evidence="1">Methionine aminopeptidase 2</fullName>
        <shortName evidence="1">MAP 2</shortName>
        <shortName evidence="1">MetAP 2</shortName>
        <ecNumber evidence="1">3.4.11.18</ecNumber>
    </recommendedName>
    <alternativeName>
        <fullName evidence="1">Peptidase M</fullName>
    </alternativeName>
</protein>
<proteinExistence type="inferred from homology"/>
<keyword id="KW-0031">Aminopeptidase</keyword>
<keyword id="KW-0963">Cytoplasm</keyword>
<keyword id="KW-0378">Hydrolase</keyword>
<keyword id="KW-0479">Metal-binding</keyword>
<keyword id="KW-0645">Protease</keyword>
<gene>
    <name type="ORF">PABG_07533</name>
</gene>
<sequence length="445" mass="48832">MAAQVASGVGNLNLNSEGGAAAKNISAQGSPENEARESDGEYDDDQGAPELGNTTAAKKKKKKTKKKKKGTSKVQTEPPRVILSSLFPNNQYPEGEIIEYQNENAYRTTNEEKRHLDRMNNDFLAEYRYAAEVHRQVRQYSQKAIKPGQTLTEIAEGIEESVRALTGHPGLEEGDNLRGGIAFPTGVNLNHCAAHYTPNAGNKMVLQYEDVMKVDFGVHINGRIVDSAFTIAFDPVYDNLLAAVKDATNTGIKQAGIDVRMSDIGAAIQEAMESYEVEIKGTSYPVKAIRNLNGHTIGRYEIHGGKNGKSVPIVKGGDQTKMEEGEVYAIETFGSTGRGYVRDDMETSHYAKIPDAPNVPLRLSSAKNLLNVITKNFGTLPFCRRYLDRLGQDKYLLGLNNLVANGIVDAYPPLCDVKGSYTAQFEHTILLRPNVKEVISRGDDY</sequence>
<reference key="1">
    <citation type="journal article" date="2011" name="PLoS Genet.">
        <title>Comparative genomic analysis of human fungal pathogens causing paracoccidioidomycosis.</title>
        <authorList>
            <person name="Desjardins C.A."/>
            <person name="Champion M.D."/>
            <person name="Holder J.W."/>
            <person name="Muszewska A."/>
            <person name="Goldberg J."/>
            <person name="Bailao A.M."/>
            <person name="Brigido M.M."/>
            <person name="Ferreira M.E."/>
            <person name="Garcia A.M."/>
            <person name="Grynberg M."/>
            <person name="Gujja S."/>
            <person name="Heiman D.I."/>
            <person name="Henn M.R."/>
            <person name="Kodira C.D."/>
            <person name="Leon-Narvaez H."/>
            <person name="Longo L.V.G."/>
            <person name="Ma L.-J."/>
            <person name="Malavazi I."/>
            <person name="Matsuo A.L."/>
            <person name="Morais F.V."/>
            <person name="Pereira M."/>
            <person name="Rodriguez-Brito S."/>
            <person name="Sakthikumar S."/>
            <person name="Salem-Izacc S.M."/>
            <person name="Sykes S.M."/>
            <person name="Teixeira M.M."/>
            <person name="Vallejo M.C."/>
            <person name="Walter M.E."/>
            <person name="Yandava C."/>
            <person name="Young S."/>
            <person name="Zeng Q."/>
            <person name="Zucker J."/>
            <person name="Felipe M.S."/>
            <person name="Goldman G.H."/>
            <person name="Haas B.J."/>
            <person name="McEwen J.G."/>
            <person name="Nino-Vega G."/>
            <person name="Puccia R."/>
            <person name="San-Blas G."/>
            <person name="Soares C.M."/>
            <person name="Birren B.W."/>
            <person name="Cuomo C.A."/>
        </authorList>
    </citation>
    <scope>NUCLEOTIDE SEQUENCE [LARGE SCALE GENOMIC DNA]</scope>
    <source>
        <strain>Pb03</strain>
    </source>
</reference>
<accession>C0SIM8</accession>
<dbReference type="EC" id="3.4.11.18" evidence="1"/>
<dbReference type="EMBL" id="KN305550">
    <property type="protein sequence ID" value="EEH18472.1"/>
    <property type="molecule type" value="Genomic_DNA"/>
</dbReference>
<dbReference type="SMR" id="C0SIM8"/>
<dbReference type="VEuPathDB" id="FungiDB:PABG_07533"/>
<dbReference type="HOGENOM" id="CLU_015857_7_1_1"/>
<dbReference type="OrthoDB" id="31552at33183"/>
<dbReference type="GO" id="GO:0005737">
    <property type="term" value="C:cytoplasm"/>
    <property type="evidence" value="ECO:0007669"/>
    <property type="project" value="UniProtKB-SubCell"/>
</dbReference>
<dbReference type="GO" id="GO:0004239">
    <property type="term" value="F:initiator methionyl aminopeptidase activity"/>
    <property type="evidence" value="ECO:0007669"/>
    <property type="project" value="UniProtKB-UniRule"/>
</dbReference>
<dbReference type="GO" id="GO:0046872">
    <property type="term" value="F:metal ion binding"/>
    <property type="evidence" value="ECO:0007669"/>
    <property type="project" value="UniProtKB-UniRule"/>
</dbReference>
<dbReference type="GO" id="GO:0070006">
    <property type="term" value="F:metalloaminopeptidase activity"/>
    <property type="evidence" value="ECO:0007669"/>
    <property type="project" value="UniProtKB-UniRule"/>
</dbReference>
<dbReference type="GO" id="GO:0006508">
    <property type="term" value="P:proteolysis"/>
    <property type="evidence" value="ECO:0007669"/>
    <property type="project" value="UniProtKB-KW"/>
</dbReference>
<dbReference type="CDD" id="cd01088">
    <property type="entry name" value="MetAP2"/>
    <property type="match status" value="1"/>
</dbReference>
<dbReference type="Gene3D" id="3.90.230.10">
    <property type="entry name" value="Creatinase/methionine aminopeptidase superfamily"/>
    <property type="match status" value="1"/>
</dbReference>
<dbReference type="Gene3D" id="1.10.10.10">
    <property type="entry name" value="Winged helix-like DNA-binding domain superfamily/Winged helix DNA-binding domain"/>
    <property type="match status" value="1"/>
</dbReference>
<dbReference type="HAMAP" id="MF_03175">
    <property type="entry name" value="MetAP_2_euk"/>
    <property type="match status" value="1"/>
</dbReference>
<dbReference type="InterPro" id="IPR036005">
    <property type="entry name" value="Creatinase/aminopeptidase-like"/>
</dbReference>
<dbReference type="InterPro" id="IPR050247">
    <property type="entry name" value="Met_Aminopeptidase_Type2"/>
</dbReference>
<dbReference type="InterPro" id="IPR000994">
    <property type="entry name" value="Pept_M24"/>
</dbReference>
<dbReference type="InterPro" id="IPR001714">
    <property type="entry name" value="Pept_M24_MAP"/>
</dbReference>
<dbReference type="InterPro" id="IPR002468">
    <property type="entry name" value="Pept_M24A_MAP2"/>
</dbReference>
<dbReference type="InterPro" id="IPR018349">
    <property type="entry name" value="Pept_M24A_MAP2_BS"/>
</dbReference>
<dbReference type="InterPro" id="IPR036388">
    <property type="entry name" value="WH-like_DNA-bd_sf"/>
</dbReference>
<dbReference type="InterPro" id="IPR036390">
    <property type="entry name" value="WH_DNA-bd_sf"/>
</dbReference>
<dbReference type="NCBIfam" id="TIGR00501">
    <property type="entry name" value="met_pdase_II"/>
    <property type="match status" value="1"/>
</dbReference>
<dbReference type="PANTHER" id="PTHR45777">
    <property type="entry name" value="METHIONINE AMINOPEPTIDASE 2"/>
    <property type="match status" value="1"/>
</dbReference>
<dbReference type="PANTHER" id="PTHR45777:SF2">
    <property type="entry name" value="METHIONINE AMINOPEPTIDASE 2"/>
    <property type="match status" value="1"/>
</dbReference>
<dbReference type="Pfam" id="PF00557">
    <property type="entry name" value="Peptidase_M24"/>
    <property type="match status" value="1"/>
</dbReference>
<dbReference type="PRINTS" id="PR00599">
    <property type="entry name" value="MAPEPTIDASE"/>
</dbReference>
<dbReference type="SUPFAM" id="SSF55920">
    <property type="entry name" value="Creatinase/aminopeptidase"/>
    <property type="match status" value="1"/>
</dbReference>
<dbReference type="SUPFAM" id="SSF46785">
    <property type="entry name" value="Winged helix' DNA-binding domain"/>
    <property type="match status" value="1"/>
</dbReference>
<dbReference type="PROSITE" id="PS01202">
    <property type="entry name" value="MAP_2"/>
    <property type="match status" value="1"/>
</dbReference>
<evidence type="ECO:0000255" key="1">
    <source>
        <dbReference type="HAMAP-Rule" id="MF_03175"/>
    </source>
</evidence>
<evidence type="ECO:0000256" key="2">
    <source>
        <dbReference type="SAM" id="MobiDB-lite"/>
    </source>
</evidence>